<dbReference type="EC" id="2.3.1.184"/>
<dbReference type="EMBL" id="X76082">
    <property type="protein sequence ID" value="CAA53693.1"/>
    <property type="molecule type" value="Genomic_DNA"/>
</dbReference>
<dbReference type="PIR" id="S70175">
    <property type="entry name" value="S70175"/>
</dbReference>
<dbReference type="SMR" id="P52988"/>
<dbReference type="STRING" id="1443113.LC20_03387"/>
<dbReference type="eggNOG" id="COG3916">
    <property type="taxonomic scope" value="Bacteria"/>
</dbReference>
<dbReference type="PHI-base" id="PHI:4213"/>
<dbReference type="GO" id="GO:0061579">
    <property type="term" value="F:N-acyl homoserine lactone synthase activity"/>
    <property type="evidence" value="ECO:0007669"/>
    <property type="project" value="UniProtKB-EC"/>
</dbReference>
<dbReference type="GO" id="GO:0009372">
    <property type="term" value="P:quorum sensing"/>
    <property type="evidence" value="ECO:0007669"/>
    <property type="project" value="UniProtKB-KW"/>
</dbReference>
<dbReference type="GO" id="GO:0007165">
    <property type="term" value="P:signal transduction"/>
    <property type="evidence" value="ECO:0007669"/>
    <property type="project" value="TreeGrafter"/>
</dbReference>
<dbReference type="Gene3D" id="3.40.630.30">
    <property type="match status" value="1"/>
</dbReference>
<dbReference type="InterPro" id="IPR016181">
    <property type="entry name" value="Acyl_CoA_acyltransferase"/>
</dbReference>
<dbReference type="InterPro" id="IPR018311">
    <property type="entry name" value="Autoind_synth_CS"/>
</dbReference>
<dbReference type="InterPro" id="IPR001690">
    <property type="entry name" value="Autoind_synthase"/>
</dbReference>
<dbReference type="PANTHER" id="PTHR39322">
    <property type="entry name" value="ACYL-HOMOSERINE-LACTONE SYNTHASE"/>
    <property type="match status" value="1"/>
</dbReference>
<dbReference type="PANTHER" id="PTHR39322:SF1">
    <property type="entry name" value="ISOVALERYL-HOMOSERINE LACTONE SYNTHASE"/>
    <property type="match status" value="1"/>
</dbReference>
<dbReference type="Pfam" id="PF00765">
    <property type="entry name" value="Autoind_synth"/>
    <property type="match status" value="1"/>
</dbReference>
<dbReference type="PRINTS" id="PR01549">
    <property type="entry name" value="AUTOINDCRSYN"/>
</dbReference>
<dbReference type="SUPFAM" id="SSF55729">
    <property type="entry name" value="Acyl-CoA N-acyltransferases (Nat)"/>
    <property type="match status" value="1"/>
</dbReference>
<dbReference type="PROSITE" id="PS00949">
    <property type="entry name" value="AUTOINDUCER_SYNTH_1"/>
    <property type="match status" value="1"/>
</dbReference>
<dbReference type="PROSITE" id="PS51187">
    <property type="entry name" value="AUTOINDUCER_SYNTH_2"/>
    <property type="match status" value="1"/>
</dbReference>
<proteinExistence type="inferred from homology"/>
<protein>
    <recommendedName>
        <fullName>Acyl-homoserine-lactone synthase</fullName>
        <ecNumber>2.3.1.184</ecNumber>
    </recommendedName>
    <alternativeName>
        <fullName>Autoinducer synthesis protein YenI</fullName>
    </alternativeName>
</protein>
<feature type="chain" id="PRO_0000210902" description="Acyl-homoserine-lactone synthase">
    <location>
        <begin position="1"/>
        <end position="214"/>
    </location>
</feature>
<comment type="function">
    <text>Required for the synthesis of autoinducer molecules such as OHHL (N-(3-oxohexanoyl)-L-homoserine lactone), and HHL (N-hexanoyl-L-homoserine lactone).</text>
</comment>
<comment type="catalytic activity">
    <reaction>
        <text>a fatty acyl-[ACP] + S-adenosyl-L-methionine = an N-acyl-L-homoserine lactone + S-methyl-5'-thioadenosine + holo-[ACP] + H(+)</text>
        <dbReference type="Rhea" id="RHEA:10096"/>
        <dbReference type="Rhea" id="RHEA-COMP:9685"/>
        <dbReference type="Rhea" id="RHEA-COMP:14125"/>
        <dbReference type="ChEBI" id="CHEBI:15378"/>
        <dbReference type="ChEBI" id="CHEBI:17509"/>
        <dbReference type="ChEBI" id="CHEBI:55474"/>
        <dbReference type="ChEBI" id="CHEBI:59789"/>
        <dbReference type="ChEBI" id="CHEBI:64479"/>
        <dbReference type="ChEBI" id="CHEBI:138651"/>
        <dbReference type="EC" id="2.3.1.184"/>
    </reaction>
</comment>
<comment type="similarity">
    <text evidence="1">Belongs to the autoinducer synthase family.</text>
</comment>
<gene>
    <name type="primary">yenI</name>
</gene>
<sequence length="214" mass="24601">MLKLFNVNFNNMPERKLDEIFSLREITFKDRLDWKVTCIDGKESDQYDDENTNYILGTIDDTIVCSVRFIDMKYPTMITGPFAPYFSDVSLPIDGFIESSRFFVEKALARDMVGNNSSLSTILFLAMVNYARDRGHKGILTVVSRGMFILLKRSGWNITVLNQGESEKNEVIYLLHLGIDNDSQQQLINKILRVHQVEPKTLETWPIIVPGIIK</sequence>
<accession>P52988</accession>
<keyword id="KW-0071">Autoinducer synthesis</keyword>
<keyword id="KW-0673">Quorum sensing</keyword>
<keyword id="KW-0949">S-adenosyl-L-methionine</keyword>
<keyword id="KW-0808">Transferase</keyword>
<evidence type="ECO:0000255" key="1">
    <source>
        <dbReference type="PROSITE-ProRule" id="PRU00533"/>
    </source>
</evidence>
<organism>
    <name type="scientific">Yersinia enterocolitica</name>
    <dbReference type="NCBI Taxonomy" id="630"/>
    <lineage>
        <taxon>Bacteria</taxon>
        <taxon>Pseudomonadati</taxon>
        <taxon>Pseudomonadota</taxon>
        <taxon>Gammaproteobacteria</taxon>
        <taxon>Enterobacterales</taxon>
        <taxon>Yersiniaceae</taxon>
        <taxon>Yersinia</taxon>
    </lineage>
</organism>
<name>YENI_YEREN</name>
<reference key="1">
    <citation type="journal article" date="1995" name="Mol. Microbiol.">
        <title>Characterisation of the yenI/yenR locus from Yersinia enterocolitica mediating the synthesis of two N-acylhomoserine lactone signal molecules.</title>
        <authorList>
            <person name="Throup J.P."/>
            <person name="Camara M."/>
            <person name="Briggs G.S."/>
            <person name="Winson M.K."/>
            <person name="Chhabra S.R."/>
            <person name="Bycroft B.W."/>
            <person name="Williams P."/>
            <person name="Stewart G.S.A.B."/>
        </authorList>
    </citation>
    <scope>NUCLEOTIDE SEQUENCE [GENOMIC DNA]</scope>
    <source>
        <strain>NCTC 10460</strain>
    </source>
</reference>